<organism>
    <name type="scientific">Leifsonia xyli subsp. xyli (strain CTCB07)</name>
    <dbReference type="NCBI Taxonomy" id="281090"/>
    <lineage>
        <taxon>Bacteria</taxon>
        <taxon>Bacillati</taxon>
        <taxon>Actinomycetota</taxon>
        <taxon>Actinomycetes</taxon>
        <taxon>Micrococcales</taxon>
        <taxon>Microbacteriaceae</taxon>
        <taxon>Leifsonia</taxon>
    </lineage>
</organism>
<gene>
    <name evidence="1" type="primary">ctaB</name>
    <name type="ordered locus">Lxx11630</name>
</gene>
<name>COXX_LEIXX</name>
<protein>
    <recommendedName>
        <fullName evidence="1">Protoheme IX farnesyltransferase</fullName>
        <ecNumber evidence="1">2.5.1.141</ecNumber>
    </recommendedName>
    <alternativeName>
        <fullName evidence="1">Heme B farnesyltransferase</fullName>
    </alternativeName>
    <alternativeName>
        <fullName evidence="1">Heme O synthase</fullName>
    </alternativeName>
</protein>
<reference key="1">
    <citation type="journal article" date="2004" name="Mol. Plant Microbe Interact.">
        <title>The genome sequence of the Gram-positive sugarcane pathogen Leifsonia xyli subsp. xyli.</title>
        <authorList>
            <person name="Monteiro-Vitorello C.B."/>
            <person name="Camargo L.E.A."/>
            <person name="Van Sluys M.A."/>
            <person name="Kitajima J.P."/>
            <person name="Truffi D."/>
            <person name="do Amaral A.M."/>
            <person name="Harakava R."/>
            <person name="de Oliveira J.C.F."/>
            <person name="Wood D."/>
            <person name="de Oliveira M.C."/>
            <person name="Miyaki C.Y."/>
            <person name="Takita M.A."/>
            <person name="da Silva A.C.R."/>
            <person name="Furlan L.R."/>
            <person name="Carraro D.M."/>
            <person name="Camarotte G."/>
            <person name="Almeida N.F. Jr."/>
            <person name="Carrer H."/>
            <person name="Coutinho L.L."/>
            <person name="El-Dorry H.A."/>
            <person name="Ferro M.I.T."/>
            <person name="Gagliardi P.R."/>
            <person name="Giglioti E."/>
            <person name="Goldman M.H.S."/>
            <person name="Goldman G.H."/>
            <person name="Kimura E.T."/>
            <person name="Ferro E.S."/>
            <person name="Kuramae E.E."/>
            <person name="Lemos E.G.M."/>
            <person name="Lemos M.V.F."/>
            <person name="Mauro S.M.Z."/>
            <person name="Machado M.A."/>
            <person name="Marino C.L."/>
            <person name="Menck C.F."/>
            <person name="Nunes L.R."/>
            <person name="Oliveira R.C."/>
            <person name="Pereira G.G."/>
            <person name="Siqueira W."/>
            <person name="de Souza A.A."/>
            <person name="Tsai S.M."/>
            <person name="Zanca A.S."/>
            <person name="Simpson A.J.G."/>
            <person name="Brumbley S.M."/>
            <person name="Setubal J.C."/>
        </authorList>
    </citation>
    <scope>NUCLEOTIDE SEQUENCE [LARGE SCALE GENOMIC DNA]</scope>
    <source>
        <strain>CTCB07</strain>
    </source>
</reference>
<evidence type="ECO:0000255" key="1">
    <source>
        <dbReference type="HAMAP-Rule" id="MF_00154"/>
    </source>
</evidence>
<accession>Q6AF34</accession>
<sequence length="307" mass="33628">MDVAVESRVEPVGRIGVSRKVKAYISLTKPRVVELLLVTTVPTMILAARGIPNLWLVLATVVGGYMSAGSAGAFNCYIDRDIDRVMRRTKNRPLVTGELSDREALVFAWALGVASVLVLGFFTNWLAAGLSVAAILIYVVFYTLILKRRTTQNIVWGGVAGCMPVLIGWAVVTNSVGWAPVILFGVIFLWTPPHYWPLSMKYREDYKDAGVPMLAVVRGRAVVGLQVVLYAWAMVACSLLLIPVARMGVLYTAVALVAGGWFLYESHRLYNLAICHATVSPMRVFHGSIAYLTLIFLAVAIDPLLPF</sequence>
<keyword id="KW-1003">Cell membrane</keyword>
<keyword id="KW-0350">Heme biosynthesis</keyword>
<keyword id="KW-0472">Membrane</keyword>
<keyword id="KW-1185">Reference proteome</keyword>
<keyword id="KW-0808">Transferase</keyword>
<keyword id="KW-0812">Transmembrane</keyword>
<keyword id="KW-1133">Transmembrane helix</keyword>
<proteinExistence type="inferred from homology"/>
<comment type="function">
    <text evidence="1">Converts heme B (protoheme IX) to heme O by substitution of the vinyl group on carbon 2 of heme B porphyrin ring with a hydroxyethyl farnesyl side group.</text>
</comment>
<comment type="catalytic activity">
    <reaction evidence="1">
        <text>heme b + (2E,6E)-farnesyl diphosphate + H2O = Fe(II)-heme o + diphosphate</text>
        <dbReference type="Rhea" id="RHEA:28070"/>
        <dbReference type="ChEBI" id="CHEBI:15377"/>
        <dbReference type="ChEBI" id="CHEBI:33019"/>
        <dbReference type="ChEBI" id="CHEBI:60344"/>
        <dbReference type="ChEBI" id="CHEBI:60530"/>
        <dbReference type="ChEBI" id="CHEBI:175763"/>
        <dbReference type="EC" id="2.5.1.141"/>
    </reaction>
</comment>
<comment type="pathway">
    <text evidence="1">Porphyrin-containing compound metabolism; heme O biosynthesis; heme O from protoheme: step 1/1.</text>
</comment>
<comment type="subcellular location">
    <subcellularLocation>
        <location evidence="1">Cell membrane</location>
        <topology evidence="1">Multi-pass membrane protein</topology>
    </subcellularLocation>
</comment>
<comment type="miscellaneous">
    <text evidence="1">Carbon 2 of the heme B porphyrin ring is defined according to the Fischer nomenclature.</text>
</comment>
<comment type="similarity">
    <text evidence="1">Belongs to the UbiA prenyltransferase family. Protoheme IX farnesyltransferase subfamily.</text>
</comment>
<feature type="chain" id="PRO_0000327066" description="Protoheme IX farnesyltransferase">
    <location>
        <begin position="1"/>
        <end position="307"/>
    </location>
</feature>
<feature type="transmembrane region" description="Helical" evidence="1">
    <location>
        <begin position="32"/>
        <end position="52"/>
    </location>
</feature>
<feature type="transmembrane region" description="Helical" evidence="1">
    <location>
        <begin position="54"/>
        <end position="74"/>
    </location>
</feature>
<feature type="transmembrane region" description="Helical" evidence="1">
    <location>
        <begin position="105"/>
        <end position="125"/>
    </location>
</feature>
<feature type="transmembrane region" description="Helical" evidence="1">
    <location>
        <begin position="126"/>
        <end position="146"/>
    </location>
</feature>
<feature type="transmembrane region" description="Helical" evidence="1">
    <location>
        <begin position="169"/>
        <end position="189"/>
    </location>
</feature>
<feature type="transmembrane region" description="Helical" evidence="1">
    <location>
        <begin position="222"/>
        <end position="242"/>
    </location>
</feature>
<feature type="transmembrane region" description="Helical" evidence="1">
    <location>
        <begin position="244"/>
        <end position="264"/>
    </location>
</feature>
<feature type="transmembrane region" description="Helical" evidence="1">
    <location>
        <begin position="287"/>
        <end position="307"/>
    </location>
</feature>
<dbReference type="EC" id="2.5.1.141" evidence="1"/>
<dbReference type="EMBL" id="AE016822">
    <property type="protein sequence ID" value="AAT89011.1"/>
    <property type="molecule type" value="Genomic_DNA"/>
</dbReference>
<dbReference type="RefSeq" id="WP_011186007.1">
    <property type="nucleotide sequence ID" value="NC_006087.1"/>
</dbReference>
<dbReference type="SMR" id="Q6AF34"/>
<dbReference type="STRING" id="281090.Lxx11630"/>
<dbReference type="KEGG" id="lxx:Lxx11630"/>
<dbReference type="eggNOG" id="COG0109">
    <property type="taxonomic scope" value="Bacteria"/>
</dbReference>
<dbReference type="HOGENOM" id="CLU_029631_0_1_11"/>
<dbReference type="UniPathway" id="UPA00834">
    <property type="reaction ID" value="UER00712"/>
</dbReference>
<dbReference type="Proteomes" id="UP000001306">
    <property type="component" value="Chromosome"/>
</dbReference>
<dbReference type="GO" id="GO:0005886">
    <property type="term" value="C:plasma membrane"/>
    <property type="evidence" value="ECO:0007669"/>
    <property type="project" value="UniProtKB-SubCell"/>
</dbReference>
<dbReference type="GO" id="GO:0008495">
    <property type="term" value="F:protoheme IX farnesyltransferase activity"/>
    <property type="evidence" value="ECO:0007669"/>
    <property type="project" value="UniProtKB-UniRule"/>
</dbReference>
<dbReference type="GO" id="GO:0048034">
    <property type="term" value="P:heme O biosynthetic process"/>
    <property type="evidence" value="ECO:0007669"/>
    <property type="project" value="UniProtKB-UniRule"/>
</dbReference>
<dbReference type="CDD" id="cd13957">
    <property type="entry name" value="PT_UbiA_Cox10"/>
    <property type="match status" value="1"/>
</dbReference>
<dbReference type="FunFam" id="1.10.357.140:FF:000001">
    <property type="entry name" value="Protoheme IX farnesyltransferase"/>
    <property type="match status" value="1"/>
</dbReference>
<dbReference type="Gene3D" id="1.10.357.140">
    <property type="entry name" value="UbiA prenyltransferase"/>
    <property type="match status" value="1"/>
</dbReference>
<dbReference type="HAMAP" id="MF_00154">
    <property type="entry name" value="CyoE_CtaB"/>
    <property type="match status" value="1"/>
</dbReference>
<dbReference type="InterPro" id="IPR006369">
    <property type="entry name" value="Protohaem_IX_farnesylTrfase"/>
</dbReference>
<dbReference type="InterPro" id="IPR000537">
    <property type="entry name" value="UbiA_prenyltransferase"/>
</dbReference>
<dbReference type="InterPro" id="IPR030470">
    <property type="entry name" value="UbiA_prenylTrfase_CS"/>
</dbReference>
<dbReference type="InterPro" id="IPR044878">
    <property type="entry name" value="UbiA_sf"/>
</dbReference>
<dbReference type="NCBIfam" id="TIGR01473">
    <property type="entry name" value="cyoE_ctaB"/>
    <property type="match status" value="1"/>
</dbReference>
<dbReference type="NCBIfam" id="NF003349">
    <property type="entry name" value="PRK04375.1-2"/>
    <property type="match status" value="1"/>
</dbReference>
<dbReference type="PANTHER" id="PTHR43448:SF7">
    <property type="entry name" value="4-HYDROXYBENZOATE SOLANESYLTRANSFERASE"/>
    <property type="match status" value="1"/>
</dbReference>
<dbReference type="PANTHER" id="PTHR43448">
    <property type="entry name" value="PROTOHEME IX FARNESYLTRANSFERASE, MITOCHONDRIAL"/>
    <property type="match status" value="1"/>
</dbReference>
<dbReference type="Pfam" id="PF01040">
    <property type="entry name" value="UbiA"/>
    <property type="match status" value="1"/>
</dbReference>
<dbReference type="PROSITE" id="PS00943">
    <property type="entry name" value="UBIA"/>
    <property type="match status" value="1"/>
</dbReference>